<gene>
    <name type="primary">cnp</name>
</gene>
<proteinExistence type="evidence at protein level"/>
<sequence>MMCKALVFAVLLLAVPLERADSRALRTPVDAIQFVEQFLEHYNDLLNIDDLENQTGDQLESPQPLSSGLKVAEYPKWVDVPSQNDNTWFRLLRGALANRKRALPDRAKRGWNRGCFGLKLDRIGSLSGLGC</sequence>
<keyword id="KW-0165">Cleavage on pair of basic residues</keyword>
<keyword id="KW-0903">Direct protein sequencing</keyword>
<keyword id="KW-1015">Disulfide bond</keyword>
<keyword id="KW-0372">Hormone</keyword>
<keyword id="KW-0964">Secreted</keyword>
<keyword id="KW-0732">Signal</keyword>
<keyword id="KW-0838">Vasoactive</keyword>
<dbReference type="EMBL" id="D88022">
    <property type="protein sequence ID" value="BAA13529.1"/>
    <property type="molecule type" value="mRNA"/>
</dbReference>
<dbReference type="PIR" id="A35418">
    <property type="entry name" value="A35418"/>
</dbReference>
<dbReference type="SMR" id="P18145"/>
<dbReference type="GO" id="GO:0005576">
    <property type="term" value="C:extracellular region"/>
    <property type="evidence" value="ECO:0007669"/>
    <property type="project" value="UniProtKB-SubCell"/>
</dbReference>
<dbReference type="GO" id="GO:0005179">
    <property type="term" value="F:hormone activity"/>
    <property type="evidence" value="ECO:0007669"/>
    <property type="project" value="UniProtKB-KW"/>
</dbReference>
<dbReference type="GO" id="GO:0097746">
    <property type="term" value="P:blood vessel diameter maintenance"/>
    <property type="evidence" value="ECO:0007669"/>
    <property type="project" value="UniProtKB-KW"/>
</dbReference>
<dbReference type="GO" id="GO:0006182">
    <property type="term" value="P:cGMP biosynthetic process"/>
    <property type="evidence" value="ECO:0000250"/>
    <property type="project" value="UniProtKB"/>
</dbReference>
<dbReference type="GO" id="GO:0007168">
    <property type="term" value="P:receptor guanylyl cyclase signaling pathway"/>
    <property type="evidence" value="ECO:0000250"/>
    <property type="project" value="UniProtKB"/>
</dbReference>
<dbReference type="InterPro" id="IPR002406">
    <property type="entry name" value="C_natriurtcpep"/>
</dbReference>
<dbReference type="InterPro" id="IPR000663">
    <property type="entry name" value="Natr_peptide"/>
</dbReference>
<dbReference type="InterPro" id="IPR030480">
    <property type="entry name" value="Natr_peptide_CS"/>
</dbReference>
<dbReference type="PANTHER" id="PTHR12167">
    <property type="entry name" value="C-TYPE NATRIURETIC PEPTIDE"/>
    <property type="match status" value="1"/>
</dbReference>
<dbReference type="PANTHER" id="PTHR12167:SF4">
    <property type="entry name" value="NATRIURETIC PEPTIDE C-LIKE PROTEIN"/>
    <property type="match status" value="1"/>
</dbReference>
<dbReference type="Pfam" id="PF00212">
    <property type="entry name" value="ANP"/>
    <property type="match status" value="1"/>
</dbReference>
<dbReference type="PRINTS" id="PR00713">
    <property type="entry name" value="CNATPEPTIDE"/>
</dbReference>
<dbReference type="PRINTS" id="PR00710">
    <property type="entry name" value="NATPEPTIDES"/>
</dbReference>
<dbReference type="SMART" id="SM00183">
    <property type="entry name" value="NAT_PEP"/>
    <property type="match status" value="1"/>
</dbReference>
<dbReference type="PROSITE" id="PS00263">
    <property type="entry name" value="NATRIURETIC_PEPTIDE"/>
    <property type="match status" value="1"/>
</dbReference>
<comment type="function">
    <text evidence="2 3">Hormone which plays a role in endochondral ossification through regulation of cartilaginous growth plate chondrocytes proliferation and differentiation. May also be vasoactive and natriuretic. May be important for freshwater adaptation.</text>
</comment>
<comment type="subcellular location">
    <subcellularLocation>
        <location>Secreted</location>
    </subcellularLocation>
</comment>
<comment type="tissue specificity">
    <text evidence="2">Highly expressed in brain and liver, and moderately in gut, gills and heart. Expressed to a low level in atrium, ventricle and liver of fresh water eels.</text>
</comment>
<comment type="developmental stage">
    <text evidence="2">Expression is generally higher in freshwater eels than in saltwater ones, except in brain, where the levels are the same.</text>
</comment>
<comment type="similarity">
    <text evidence="4">Belongs to the natriuretic peptide family.</text>
</comment>
<reference key="1">
    <citation type="journal article" date="2001" name="Am. J. Physiol.">
        <title>Enhanced expression and release of C-type natriuretic peptide in freshwater eels.</title>
        <authorList>
            <person name="Takei Y."/>
            <person name="Inoue K."/>
            <person name="Ando K."/>
            <person name="Ihara T."/>
            <person name="Katafuchi T."/>
            <person name="Kashiwagi M."/>
            <person name="Hirose S."/>
        </authorList>
    </citation>
    <scope>NUCLEOTIDE SEQUENCE [MRNA]</scope>
    <scope>FUNCTION</scope>
    <scope>TISSUE SPECIFICITY</scope>
    <scope>DEVELOPMENTAL STAGE</scope>
    <source>
        <tissue>Brain</tissue>
    </source>
</reference>
<reference key="2">
    <citation type="journal article" date="1990" name="Biochem. Biophys. Res. Commun.">
        <title>Amino acid sequence and relative biological activity of a natriuretic peptide isolated from eel brain.</title>
        <authorList>
            <person name="Takei Y."/>
            <person name="Takahashi A."/>
            <person name="Watanabe T.X."/>
            <person name="Nakajima K."/>
            <person name="Sakakibara S."/>
            <person name="Takao T."/>
            <person name="Shimonishi Y."/>
        </authorList>
    </citation>
    <scope>PROTEIN SEQUENCE OF 110-131</scope>
    <scope>FUNCTION</scope>
    <source>
        <tissue>Brain</tissue>
    </source>
</reference>
<name>ANFC_ANGJA</name>
<organism>
    <name type="scientific">Anguilla japonica</name>
    <name type="common">Japanese eel</name>
    <dbReference type="NCBI Taxonomy" id="7937"/>
    <lineage>
        <taxon>Eukaryota</taxon>
        <taxon>Metazoa</taxon>
        <taxon>Chordata</taxon>
        <taxon>Craniata</taxon>
        <taxon>Vertebrata</taxon>
        <taxon>Euteleostomi</taxon>
        <taxon>Actinopterygii</taxon>
        <taxon>Neopterygii</taxon>
        <taxon>Teleostei</taxon>
        <taxon>Anguilliformes</taxon>
        <taxon>Anguillidae</taxon>
        <taxon>Anguilla</taxon>
    </lineage>
</organism>
<feature type="signal peptide" evidence="1">
    <location>
        <begin position="1"/>
        <end position="20"/>
    </location>
</feature>
<feature type="propeptide" id="PRO_0000001579" evidence="3">
    <location>
        <begin position="21"/>
        <end position="109"/>
    </location>
</feature>
<feature type="peptide" id="PRO_0000001580" description="C-type natriuretic peptide">
    <location>
        <begin position="110"/>
        <end position="131"/>
    </location>
</feature>
<feature type="disulfide bond">
    <location>
        <begin position="115"/>
        <end position="131"/>
    </location>
</feature>
<accession>P18145</accession>
<protein>
    <recommendedName>
        <fullName>C-type natriuretic peptide</fullName>
    </recommendedName>
    <alternativeName>
        <fullName>BNP-like peptide CNP-22</fullName>
    </alternativeName>
</protein>
<evidence type="ECO:0000255" key="1"/>
<evidence type="ECO:0000269" key="2">
    <source>
    </source>
</evidence>
<evidence type="ECO:0000269" key="3">
    <source>
    </source>
</evidence>
<evidence type="ECO:0000305" key="4"/>